<protein>
    <recommendedName>
        <fullName>COMM domain-containing protein 9</fullName>
    </recommendedName>
</protein>
<keyword id="KW-0007">Acetylation</keyword>
<keyword id="KW-0968">Cytoplasmic vesicle</keyword>
<keyword id="KW-0406">Ion transport</keyword>
<keyword id="KW-0539">Nucleus</keyword>
<keyword id="KW-1185">Reference proteome</keyword>
<keyword id="KW-0915">Sodium</keyword>
<keyword id="KW-0739">Sodium transport</keyword>
<keyword id="KW-0804">Transcription</keyword>
<keyword id="KW-0805">Transcription regulation</keyword>
<keyword id="KW-0813">Transport</keyword>
<keyword id="KW-0833">Ubl conjugation pathway</keyword>
<dbReference type="EMBL" id="BC109885">
    <property type="protein sequence ID" value="AAI09886.1"/>
    <property type="molecule type" value="mRNA"/>
</dbReference>
<dbReference type="RefSeq" id="NP_001033609.1">
    <property type="nucleotide sequence ID" value="NM_001038520.2"/>
</dbReference>
<dbReference type="SMR" id="Q2TBN5"/>
<dbReference type="FunCoup" id="Q2TBN5">
    <property type="interactions" value="1829"/>
</dbReference>
<dbReference type="STRING" id="9913.ENSBTAP00000025346"/>
<dbReference type="PaxDb" id="9913-ENSBTAP00000025346"/>
<dbReference type="GeneID" id="510280"/>
<dbReference type="KEGG" id="bta:510280"/>
<dbReference type="CTD" id="29099"/>
<dbReference type="eggNOG" id="ENOG502RHPY">
    <property type="taxonomic scope" value="Eukaryota"/>
</dbReference>
<dbReference type="InParanoid" id="Q2TBN5"/>
<dbReference type="OrthoDB" id="64318at2759"/>
<dbReference type="Proteomes" id="UP000009136">
    <property type="component" value="Unplaced"/>
</dbReference>
<dbReference type="GO" id="GO:0031410">
    <property type="term" value="C:cytoplasmic vesicle"/>
    <property type="evidence" value="ECO:0007669"/>
    <property type="project" value="UniProtKB-KW"/>
</dbReference>
<dbReference type="GO" id="GO:0005634">
    <property type="term" value="C:nucleus"/>
    <property type="evidence" value="ECO:0007669"/>
    <property type="project" value="UniProtKB-SubCell"/>
</dbReference>
<dbReference type="GO" id="GO:0006814">
    <property type="term" value="P:sodium ion transport"/>
    <property type="evidence" value="ECO:0007669"/>
    <property type="project" value="UniProtKB-KW"/>
</dbReference>
<dbReference type="CDD" id="cd04757">
    <property type="entry name" value="Commd9"/>
    <property type="match status" value="1"/>
</dbReference>
<dbReference type="InterPro" id="IPR017920">
    <property type="entry name" value="COMM"/>
</dbReference>
<dbReference type="InterPro" id="IPR037360">
    <property type="entry name" value="COMMD9"/>
</dbReference>
<dbReference type="InterPro" id="IPR048676">
    <property type="entry name" value="COMMD9_N"/>
</dbReference>
<dbReference type="PANTHER" id="PTHR15663">
    <property type="entry name" value="COMM DOMAIN-CONTAINING PROTEIN 9"/>
    <property type="match status" value="1"/>
</dbReference>
<dbReference type="PANTHER" id="PTHR15663:SF4">
    <property type="entry name" value="COMM DOMAIN-CONTAINING PROTEIN 9"/>
    <property type="match status" value="1"/>
</dbReference>
<dbReference type="Pfam" id="PF07258">
    <property type="entry name" value="COMM_domain"/>
    <property type="match status" value="1"/>
</dbReference>
<dbReference type="Pfam" id="PF20923">
    <property type="entry name" value="COMMD9_HN"/>
    <property type="match status" value="1"/>
</dbReference>
<dbReference type="PROSITE" id="PS51269">
    <property type="entry name" value="COMM"/>
    <property type="match status" value="1"/>
</dbReference>
<proteinExistence type="evidence at transcript level"/>
<gene>
    <name type="primary">COMMD9</name>
</gene>
<accession>Q2TBN5</accession>
<organism>
    <name type="scientific">Bos taurus</name>
    <name type="common">Bovine</name>
    <dbReference type="NCBI Taxonomy" id="9913"/>
    <lineage>
        <taxon>Eukaryota</taxon>
        <taxon>Metazoa</taxon>
        <taxon>Chordata</taxon>
        <taxon>Craniata</taxon>
        <taxon>Vertebrata</taxon>
        <taxon>Euteleostomi</taxon>
        <taxon>Mammalia</taxon>
        <taxon>Eutheria</taxon>
        <taxon>Laurasiatheria</taxon>
        <taxon>Artiodactyla</taxon>
        <taxon>Ruminantia</taxon>
        <taxon>Pecora</taxon>
        <taxon>Bovidae</taxon>
        <taxon>Bovinae</taxon>
        <taxon>Bos</taxon>
    </lineage>
</organism>
<reference key="1">
    <citation type="submission" date="2005-11" db="EMBL/GenBank/DDBJ databases">
        <authorList>
            <consortium name="NIH - Mammalian Gene Collection (MGC) project"/>
        </authorList>
    </citation>
    <scope>NUCLEOTIDE SEQUENCE [LARGE SCALE MRNA]</scope>
    <source>
        <strain>Crossbred X Angus</strain>
        <tissue>Liver</tissue>
    </source>
</reference>
<evidence type="ECO:0000250" key="1">
    <source>
        <dbReference type="UniProtKB" id="Q9P000"/>
    </source>
</evidence>
<evidence type="ECO:0000255" key="2">
    <source>
        <dbReference type="PROSITE-ProRule" id="PRU00602"/>
    </source>
</evidence>
<evidence type="ECO:0000305" key="3"/>
<name>COMD9_BOVIN</name>
<sequence length="198" mass="21781">MAALTAENFAALQSLLKASSKDVVRQLCQESFSSSALGSKNLLDVTCSSLSVTQEEAEQLLQALHRLTRLAVFRDLSSAEAILALFPENFHQNLKNLLTKIILEHVSAWRAEAQVNQISLPRLVDLDWRVDIKTSSDSISRMAVPTCLLQMKIQEDPSLCGDRPSVSDVTVELSKETLDTMLDGLGRIRDQLSAVASK</sequence>
<comment type="function">
    <text evidence="1">Scaffold protein in the commander complex that is essential for endosomal recycling of transmembrane cargos; the commander complex is composed of the CCC subcomplex and the retriever subcomplex (By similarity). May modulate activity of cullin-RING E3 ubiquitin ligase (CRL) complexes (By similarity). May down-regulate activation of NF-kappa-B (By similarity). Modulates Na(+) transport in epithelial cells by regulation of apical cell surface expression of amiloride-sensitive sodium channel (ENaC) subunits (By similarity).</text>
</comment>
<comment type="subunit">
    <text evidence="1">Component of the commander complex consisting of the CCC subcomplex and the retriever subcomplex (By similarity). Component of the CCC (COMMD/CCDC22/CCDC93) subcomplex consisting of COMMD1, COMMD2, COMMD3, COMMD4, COMMD5, COMMD6, COMMD7, COMMD8, COMMD9, COMMD10, CCDC22 and CCDC93; within the complex forms a heterodimer with COMMD7 (By similarity). Interacts with RELB and NFKB1/p105 (By similarity). Interacts with CCDC22, CCDC93, SCNN1B, CUL1 (By similarity).</text>
</comment>
<comment type="subcellular location">
    <subcellularLocation>
        <location evidence="1">Nucleus</location>
    </subcellularLocation>
    <subcellularLocation>
        <location evidence="1">Cytoplasmic vesicle</location>
    </subcellularLocation>
</comment>
<comment type="similarity">
    <text evidence="3">Belongs to the COMM domain-containing protein 9 family.</text>
</comment>
<feature type="initiator methionine" description="Removed" evidence="1">
    <location>
        <position position="1"/>
    </location>
</feature>
<feature type="chain" id="PRO_0000260185" description="COMM domain-containing protein 9">
    <location>
        <begin position="2"/>
        <end position="198"/>
    </location>
</feature>
<feature type="domain" description="COMM" evidence="2">
    <location>
        <begin position="122"/>
        <end position="196"/>
    </location>
</feature>
<feature type="modified residue" description="N-acetylalanine" evidence="1">
    <location>
        <position position="2"/>
    </location>
</feature>